<accession>B0KMX9</accession>
<protein>
    <recommendedName>
        <fullName evidence="1">NADH-quinone oxidoreductase subunit B</fullName>
        <ecNumber evidence="1">7.1.1.-</ecNumber>
    </recommendedName>
    <alternativeName>
        <fullName evidence="1">NADH dehydrogenase I subunit B</fullName>
    </alternativeName>
    <alternativeName>
        <fullName evidence="1">NDH-1 subunit B</fullName>
    </alternativeName>
</protein>
<feature type="chain" id="PRO_0000376315" description="NADH-quinone oxidoreductase subunit B">
    <location>
        <begin position="1"/>
        <end position="225"/>
    </location>
</feature>
<feature type="binding site" evidence="1">
    <location>
        <position position="68"/>
    </location>
    <ligand>
        <name>[4Fe-4S] cluster</name>
        <dbReference type="ChEBI" id="CHEBI:49883"/>
    </ligand>
</feature>
<feature type="binding site" evidence="1">
    <location>
        <position position="69"/>
    </location>
    <ligand>
        <name>[4Fe-4S] cluster</name>
        <dbReference type="ChEBI" id="CHEBI:49883"/>
    </ligand>
</feature>
<feature type="binding site" evidence="1">
    <location>
        <position position="134"/>
    </location>
    <ligand>
        <name>[4Fe-4S] cluster</name>
        <dbReference type="ChEBI" id="CHEBI:49883"/>
    </ligand>
</feature>
<feature type="binding site" evidence="1">
    <location>
        <position position="163"/>
    </location>
    <ligand>
        <name>[4Fe-4S] cluster</name>
        <dbReference type="ChEBI" id="CHEBI:49883"/>
    </ligand>
</feature>
<comment type="function">
    <text evidence="1">NDH-1 shuttles electrons from NADH, via FMN and iron-sulfur (Fe-S) centers, to quinones in the respiratory chain. The immediate electron acceptor for the enzyme in this species is believed to be ubiquinone. Couples the redox reaction to proton translocation (for every two electrons transferred, four hydrogen ions are translocated across the cytoplasmic membrane), and thus conserves the redox energy in a proton gradient.</text>
</comment>
<comment type="catalytic activity">
    <reaction evidence="1">
        <text>a quinone + NADH + 5 H(+)(in) = a quinol + NAD(+) + 4 H(+)(out)</text>
        <dbReference type="Rhea" id="RHEA:57888"/>
        <dbReference type="ChEBI" id="CHEBI:15378"/>
        <dbReference type="ChEBI" id="CHEBI:24646"/>
        <dbReference type="ChEBI" id="CHEBI:57540"/>
        <dbReference type="ChEBI" id="CHEBI:57945"/>
        <dbReference type="ChEBI" id="CHEBI:132124"/>
    </reaction>
</comment>
<comment type="cofactor">
    <cofactor evidence="1">
        <name>[4Fe-4S] cluster</name>
        <dbReference type="ChEBI" id="CHEBI:49883"/>
    </cofactor>
    <text evidence="1">Binds 1 [4Fe-4S] cluster.</text>
</comment>
<comment type="subunit">
    <text evidence="1">NDH-1 is composed of 13 different subunits. Subunits NuoB, CD, E, F, and G constitute the peripheral sector of the complex.</text>
</comment>
<comment type="subcellular location">
    <subcellularLocation>
        <location evidence="1">Cell inner membrane</location>
        <topology evidence="1">Peripheral membrane protein</topology>
        <orientation evidence="1">Cytoplasmic side</orientation>
    </subcellularLocation>
</comment>
<comment type="similarity">
    <text evidence="1">Belongs to the complex I 20 kDa subunit family.</text>
</comment>
<keyword id="KW-0004">4Fe-4S</keyword>
<keyword id="KW-0997">Cell inner membrane</keyword>
<keyword id="KW-1003">Cell membrane</keyword>
<keyword id="KW-0408">Iron</keyword>
<keyword id="KW-0411">Iron-sulfur</keyword>
<keyword id="KW-0472">Membrane</keyword>
<keyword id="KW-0479">Metal-binding</keyword>
<keyword id="KW-0520">NAD</keyword>
<keyword id="KW-0874">Quinone</keyword>
<keyword id="KW-1278">Translocase</keyword>
<keyword id="KW-0813">Transport</keyword>
<keyword id="KW-0830">Ubiquinone</keyword>
<dbReference type="EC" id="7.1.1.-" evidence="1"/>
<dbReference type="EMBL" id="CP000926">
    <property type="protein sequence ID" value="ABY99583.1"/>
    <property type="molecule type" value="Genomic_DNA"/>
</dbReference>
<dbReference type="RefSeq" id="WP_008096180.1">
    <property type="nucleotide sequence ID" value="NC_010322.1"/>
</dbReference>
<dbReference type="SMR" id="B0KMX9"/>
<dbReference type="KEGG" id="ppg:PputGB1_3692"/>
<dbReference type="eggNOG" id="COG0377">
    <property type="taxonomic scope" value="Bacteria"/>
</dbReference>
<dbReference type="HOGENOM" id="CLU_055737_7_3_6"/>
<dbReference type="Proteomes" id="UP000002157">
    <property type="component" value="Chromosome"/>
</dbReference>
<dbReference type="GO" id="GO:0005886">
    <property type="term" value="C:plasma membrane"/>
    <property type="evidence" value="ECO:0007669"/>
    <property type="project" value="UniProtKB-SubCell"/>
</dbReference>
<dbReference type="GO" id="GO:0045271">
    <property type="term" value="C:respiratory chain complex I"/>
    <property type="evidence" value="ECO:0007669"/>
    <property type="project" value="TreeGrafter"/>
</dbReference>
<dbReference type="GO" id="GO:0051539">
    <property type="term" value="F:4 iron, 4 sulfur cluster binding"/>
    <property type="evidence" value="ECO:0007669"/>
    <property type="project" value="UniProtKB-KW"/>
</dbReference>
<dbReference type="GO" id="GO:0005506">
    <property type="term" value="F:iron ion binding"/>
    <property type="evidence" value="ECO:0007669"/>
    <property type="project" value="UniProtKB-UniRule"/>
</dbReference>
<dbReference type="GO" id="GO:0008137">
    <property type="term" value="F:NADH dehydrogenase (ubiquinone) activity"/>
    <property type="evidence" value="ECO:0007669"/>
    <property type="project" value="InterPro"/>
</dbReference>
<dbReference type="GO" id="GO:0050136">
    <property type="term" value="F:NADH:ubiquinone reductase (non-electrogenic) activity"/>
    <property type="evidence" value="ECO:0007669"/>
    <property type="project" value="UniProtKB-UniRule"/>
</dbReference>
<dbReference type="GO" id="GO:0048038">
    <property type="term" value="F:quinone binding"/>
    <property type="evidence" value="ECO:0007669"/>
    <property type="project" value="UniProtKB-KW"/>
</dbReference>
<dbReference type="GO" id="GO:0009060">
    <property type="term" value="P:aerobic respiration"/>
    <property type="evidence" value="ECO:0007669"/>
    <property type="project" value="TreeGrafter"/>
</dbReference>
<dbReference type="GO" id="GO:0015990">
    <property type="term" value="P:electron transport coupled proton transport"/>
    <property type="evidence" value="ECO:0007669"/>
    <property type="project" value="TreeGrafter"/>
</dbReference>
<dbReference type="FunFam" id="3.40.50.12280:FF:000002">
    <property type="entry name" value="NADH-quinone oxidoreductase subunit B"/>
    <property type="match status" value="1"/>
</dbReference>
<dbReference type="Gene3D" id="3.40.50.12280">
    <property type="match status" value="1"/>
</dbReference>
<dbReference type="HAMAP" id="MF_01356">
    <property type="entry name" value="NDH1_NuoB"/>
    <property type="match status" value="1"/>
</dbReference>
<dbReference type="InterPro" id="IPR006137">
    <property type="entry name" value="NADH_UbQ_OxRdtase-like_20kDa"/>
</dbReference>
<dbReference type="InterPro" id="IPR006138">
    <property type="entry name" value="NADH_UQ_OxRdtase_20Kd_su"/>
</dbReference>
<dbReference type="NCBIfam" id="TIGR01957">
    <property type="entry name" value="nuoB_fam"/>
    <property type="match status" value="1"/>
</dbReference>
<dbReference type="NCBIfam" id="NF005012">
    <property type="entry name" value="PRK06411.1"/>
    <property type="match status" value="1"/>
</dbReference>
<dbReference type="PANTHER" id="PTHR11995">
    <property type="entry name" value="NADH DEHYDROGENASE"/>
    <property type="match status" value="1"/>
</dbReference>
<dbReference type="PANTHER" id="PTHR11995:SF14">
    <property type="entry name" value="NADH DEHYDROGENASE [UBIQUINONE] IRON-SULFUR PROTEIN 7, MITOCHONDRIAL"/>
    <property type="match status" value="1"/>
</dbReference>
<dbReference type="Pfam" id="PF01058">
    <property type="entry name" value="Oxidored_q6"/>
    <property type="match status" value="1"/>
</dbReference>
<dbReference type="SUPFAM" id="SSF56770">
    <property type="entry name" value="HydA/Nqo6-like"/>
    <property type="match status" value="1"/>
</dbReference>
<dbReference type="PROSITE" id="PS01150">
    <property type="entry name" value="COMPLEX1_20K"/>
    <property type="match status" value="1"/>
</dbReference>
<gene>
    <name evidence="1" type="primary">nuoB</name>
    <name type="ordered locus">PputGB1_3692</name>
</gene>
<evidence type="ECO:0000255" key="1">
    <source>
        <dbReference type="HAMAP-Rule" id="MF_01356"/>
    </source>
</evidence>
<name>NUOB_PSEPG</name>
<organism>
    <name type="scientific">Pseudomonas putida (strain GB-1)</name>
    <dbReference type="NCBI Taxonomy" id="76869"/>
    <lineage>
        <taxon>Bacteria</taxon>
        <taxon>Pseudomonadati</taxon>
        <taxon>Pseudomonadota</taxon>
        <taxon>Gammaproteobacteria</taxon>
        <taxon>Pseudomonadales</taxon>
        <taxon>Pseudomonadaceae</taxon>
        <taxon>Pseudomonas</taxon>
    </lineage>
</organism>
<sequence>MQYNLTRIDPDAPNEQYPVGERETVTDQLLEDQVHKNIYMGKLEDVLRGAVNWGRKNSLWPYNFGLSCCYVEMTTAFTAPHDIARFGAEVIRASPRQADFMVIAGTCFVKMAPIIQRLYEQMLEPKWVISMGSCANSGGMYDIYSVVQGVDKFLPVDVYVPGCPPRPEAFLQGLMLLQESIGQERRPLSWVVGDQGIYRAEMPAQKDLRREQRIAVTNLRSPDEV</sequence>
<reference key="1">
    <citation type="submission" date="2008-01" db="EMBL/GenBank/DDBJ databases">
        <title>Complete sequence of Pseudomonas putida GB-1.</title>
        <authorList>
            <consortium name="US DOE Joint Genome Institute"/>
            <person name="Copeland A."/>
            <person name="Lucas S."/>
            <person name="Lapidus A."/>
            <person name="Barry K."/>
            <person name="Glavina del Rio T."/>
            <person name="Dalin E."/>
            <person name="Tice H."/>
            <person name="Pitluck S."/>
            <person name="Bruce D."/>
            <person name="Goodwin L."/>
            <person name="Chertkov O."/>
            <person name="Brettin T."/>
            <person name="Detter J.C."/>
            <person name="Han C."/>
            <person name="Kuske C.R."/>
            <person name="Schmutz J."/>
            <person name="Larimer F."/>
            <person name="Land M."/>
            <person name="Hauser L."/>
            <person name="Kyrpides N."/>
            <person name="Kim E."/>
            <person name="McCarthy J.K."/>
            <person name="Richardson P."/>
        </authorList>
    </citation>
    <scope>NUCLEOTIDE SEQUENCE [LARGE SCALE GENOMIC DNA]</scope>
    <source>
        <strain>GB-1</strain>
    </source>
</reference>
<proteinExistence type="inferred from homology"/>